<comment type="subcellular location">
    <subcellularLocation>
        <location evidence="2">Membrane</location>
        <topology evidence="2">Multi-pass membrane protein</topology>
    </subcellularLocation>
</comment>
<keyword id="KW-0472">Membrane</keyword>
<keyword id="KW-1185">Reference proteome</keyword>
<keyword id="KW-0732">Signal</keyword>
<keyword id="KW-0812">Transmembrane</keyword>
<keyword id="KW-1133">Transmembrane helix</keyword>
<proteinExistence type="inferred from homology"/>
<name>YO13_BPL2</name>
<reference key="1">
    <citation type="journal article" date="1994" name="Gene">
        <title>Sequence analysis of a unique temperature phage: mycoplasma virus L2.</title>
        <authorList>
            <person name="Maniloff J."/>
            <person name="Kampo G.J."/>
            <person name="Dascher C.C."/>
        </authorList>
    </citation>
    <scope>NUCLEOTIDE SEQUENCE [LARGE SCALE GENOMIC DNA]</scope>
</reference>
<feature type="signal peptide" evidence="1">
    <location>
        <begin position="1"/>
        <end position="27"/>
    </location>
</feature>
<feature type="chain" id="PRO_0000022710" description="Uncharacterized 81.3 kDa protein">
    <location>
        <begin position="28"/>
        <end position="738"/>
    </location>
</feature>
<feature type="transmembrane region" description="Helical" evidence="1">
    <location>
        <begin position="612"/>
        <end position="632"/>
    </location>
</feature>
<feature type="transmembrane region" description="Helical" evidence="1">
    <location>
        <begin position="712"/>
        <end position="732"/>
    </location>
</feature>
<organismHost>
    <name type="scientific">Mycoplasma</name>
    <dbReference type="NCBI Taxonomy" id="2093"/>
</organismHost>
<protein>
    <recommendedName>
        <fullName>Uncharacterized 81.3 kDa protein</fullName>
    </recommendedName>
    <alternativeName>
        <fullName>ORF13</fullName>
    </alternativeName>
</protein>
<sequence length="738" mass="81313">MKKLLTSLMLSTASFMLLLTVSNKAYAYEETETFTFEIYNMNSVVANPGLYNYLVDLTDGYGYGQMQHVTVDISLLDYNTAYLEKNLNGFNLFFTSDTGVYEFGIDASGNIELLNDPVAHDEYSLTFTGLNNAYQDLFYEEIVVEFEIVSFDSLEGVGTLDPNPYVVLSELLTENYEYNETIAPFIWVNDVQYQNYYSVYDIGSDLALIEIDGPTLNIYSDRFEEYNETFDVGDEFRIIFKIYKTWTQAHDYGRIRTNASTLYLNQQSDTSALLSHSESTNVINVNNIAVGDEIVMQSPYTDFSVSYGNVGFPRTYLVEQENIAAVKMIKNSSDNTNYTFILFYWENGSVVSRTVNNINLANRNSLNIKFDGGFRKALNYSDVMVANVDLLTPLEDFLPNMVAWDAIDGDISDSIVITDNDGYSPDTVGIYNVEFSVTNSNGQTSSIIAPVHVVDIVNPVINGVSDTVHISYDQTFNVTNWVNSLTVSDNYYTGLSISIKENTYTVNKNKLGTYKITVQAVDPSGNIGTLTRTIVVNDGIGPVFNGINTITASINENITVEQIKAGLAAIDAIDGNVTTSIVVDSDNLTGKANTVGVYEVVFRAVDAAGNQTFHTVTVSIVASPPGFYILNSNSVRLLPGANLTIEQILNILNASDAENISTNYTVSVPGTYNLSFTLYGESHQVSITVLGQNDSIIPTPVIPGESNPGFNITYALIIGLSAIALLATTVTILNKKRK</sequence>
<dbReference type="EMBL" id="L13696">
    <property type="protein sequence ID" value="AAA87969.1"/>
    <property type="molecule type" value="Genomic_DNA"/>
</dbReference>
<dbReference type="RefSeq" id="NP_040821.1">
    <property type="nucleotide sequence ID" value="NC_001447.1"/>
</dbReference>
<dbReference type="GeneID" id="1261017"/>
<dbReference type="KEGG" id="vg:1261017"/>
<dbReference type="Proteomes" id="UP000001573">
    <property type="component" value="Genome"/>
</dbReference>
<dbReference type="GO" id="GO:0016020">
    <property type="term" value="C:membrane"/>
    <property type="evidence" value="ECO:0007669"/>
    <property type="project" value="UniProtKB-SubCell"/>
</dbReference>
<dbReference type="Gene3D" id="2.60.40.10">
    <property type="entry name" value="Immunoglobulins"/>
    <property type="match status" value="3"/>
</dbReference>
<dbReference type="InterPro" id="IPR013783">
    <property type="entry name" value="Ig-like_fold"/>
</dbReference>
<organism>
    <name type="scientific">Acholeplasma phage L2</name>
    <name type="common">Bacteriophage L2</name>
    <dbReference type="NCBI Taxonomy" id="46014"/>
    <lineage>
        <taxon>Viruses</taxon>
        <taxon>Viruses incertae sedis</taxon>
        <taxon>Plasmaviridae</taxon>
        <taxon>Plasmavirus</taxon>
    </lineage>
</organism>
<evidence type="ECO:0000255" key="1"/>
<evidence type="ECO:0000305" key="2"/>
<accession>P42548</accession>